<accession>Q8BJZ4</accession>
<accession>B2KFS5</accession>
<accession>Q8VCG7</accession>
<comment type="subunit">
    <text evidence="1">Component of the mitochondrial ribosome small subunit (28S) which comprises a 12S rRNA and about 30 distinct proteins.</text>
</comment>
<comment type="subcellular location">
    <subcellularLocation>
        <location evidence="1">Mitochondrion</location>
    </subcellularLocation>
</comment>
<comment type="similarity">
    <text evidence="3">Belongs to the mitochondrion-specific ribosomal protein mS35 family.</text>
</comment>
<comment type="sequence caution" evidence="3">
    <conflict type="erroneous initiation">
        <sequence resource="EMBL-CDS" id="AAH19964"/>
    </conflict>
</comment>
<protein>
    <recommendedName>
        <fullName evidence="3">Small ribosomal subunit protein mS35</fullName>
    </recommendedName>
    <alternativeName>
        <fullName>28S ribosomal protein S35, mitochondrial</fullName>
        <shortName>MRP-S35</shortName>
        <shortName>S35mt</shortName>
    </alternativeName>
</protein>
<sequence>MAAAALQLRQSLCPGPRVLRTFSSVASPAAPRAGPRTASRSERPMRRKALPPRTEKMDTDQDWPSVYPTAAPFKPSAVPLPVRMGYPVKKGVPMAKEGNLELLKIPNFLHLTPVAIKRHCAALKDFCTEWPAALDSDEKCEEHFPVEIDTADYVSSGPSIRNPKARAVTLRVKLSSLNLDNHAKKKLIKLVGERYCKATDVLTITTDRCPLKRQNYDYAVYLLTVLYHESWKTEDWENSKTEEDMDEYVWAKSSSENSVLQTLLQMRAAESSVAPSREELLGTKEVEDYQKCVVRLKNEGENEASLAQYKESVKRLLNLA</sequence>
<gene>
    <name evidence="7" type="primary">Mrps35</name>
</gene>
<proteinExistence type="evidence at protein level"/>
<keyword id="KW-0002">3D-structure</keyword>
<keyword id="KW-0496">Mitochondrion</keyword>
<keyword id="KW-1185">Reference proteome</keyword>
<keyword id="KW-0687">Ribonucleoprotein</keyword>
<keyword id="KW-0689">Ribosomal protein</keyword>
<keyword id="KW-0809">Transit peptide</keyword>
<organism>
    <name type="scientific">Mus musculus</name>
    <name type="common">Mouse</name>
    <dbReference type="NCBI Taxonomy" id="10090"/>
    <lineage>
        <taxon>Eukaryota</taxon>
        <taxon>Metazoa</taxon>
        <taxon>Chordata</taxon>
        <taxon>Craniata</taxon>
        <taxon>Vertebrata</taxon>
        <taxon>Euteleostomi</taxon>
        <taxon>Mammalia</taxon>
        <taxon>Eutheria</taxon>
        <taxon>Euarchontoglires</taxon>
        <taxon>Glires</taxon>
        <taxon>Rodentia</taxon>
        <taxon>Myomorpha</taxon>
        <taxon>Muroidea</taxon>
        <taxon>Muridae</taxon>
        <taxon>Murinae</taxon>
        <taxon>Mus</taxon>
        <taxon>Mus</taxon>
    </lineage>
</organism>
<evidence type="ECO:0000250" key="1">
    <source>
        <dbReference type="UniProtKB" id="Q2YDF6"/>
    </source>
</evidence>
<evidence type="ECO:0000256" key="2">
    <source>
        <dbReference type="SAM" id="MobiDB-lite"/>
    </source>
</evidence>
<evidence type="ECO:0000305" key="3"/>
<evidence type="ECO:0000312" key="4">
    <source>
        <dbReference type="EMBL" id="AAH19964.1"/>
    </source>
</evidence>
<evidence type="ECO:0000312" key="5">
    <source>
        <dbReference type="EMBL" id="BAC36950.1"/>
    </source>
</evidence>
<evidence type="ECO:0000312" key="6">
    <source>
        <dbReference type="EMBL" id="BAE41824.1"/>
    </source>
</evidence>
<evidence type="ECO:0000312" key="7">
    <source>
        <dbReference type="MGI" id="MGI:2385255"/>
    </source>
</evidence>
<dbReference type="EMBL" id="AK077677">
    <property type="protein sequence ID" value="BAC36950.1"/>
    <property type="molecule type" value="mRNA"/>
</dbReference>
<dbReference type="EMBL" id="AK170480">
    <property type="protein sequence ID" value="BAE41824.1"/>
    <property type="molecule type" value="mRNA"/>
</dbReference>
<dbReference type="EMBL" id="CU207396">
    <property type="status" value="NOT_ANNOTATED_CDS"/>
    <property type="molecule type" value="Genomic_DNA"/>
</dbReference>
<dbReference type="EMBL" id="BC019964">
    <property type="protein sequence ID" value="AAH19964.1"/>
    <property type="status" value="ALT_INIT"/>
    <property type="molecule type" value="mRNA"/>
</dbReference>
<dbReference type="CCDS" id="CCDS51959.1"/>
<dbReference type="RefSeq" id="NP_663548.2">
    <property type="nucleotide sequence ID" value="NM_145573.2"/>
</dbReference>
<dbReference type="PDB" id="7PNT">
    <property type="method" value="EM"/>
    <property type="resolution" value="3.19 A"/>
    <property type="chains" value="1=1-320"/>
</dbReference>
<dbReference type="PDB" id="7PNU">
    <property type="method" value="EM"/>
    <property type="resolution" value="3.06 A"/>
    <property type="chains" value="1=1-320"/>
</dbReference>
<dbReference type="PDB" id="7PNV">
    <property type="method" value="EM"/>
    <property type="resolution" value="3.06 A"/>
    <property type="chains" value="1=1-320"/>
</dbReference>
<dbReference type="PDB" id="7PNW">
    <property type="method" value="EM"/>
    <property type="resolution" value="3.09 A"/>
    <property type="chains" value="1=1-320"/>
</dbReference>
<dbReference type="PDBsum" id="7PNT"/>
<dbReference type="PDBsum" id="7PNU"/>
<dbReference type="PDBsum" id="7PNV"/>
<dbReference type="PDBsum" id="7PNW"/>
<dbReference type="EMDB" id="EMD-13551"/>
<dbReference type="EMDB" id="EMD-13552"/>
<dbReference type="EMDB" id="EMD-13553"/>
<dbReference type="EMDB" id="EMD-13554"/>
<dbReference type="SMR" id="Q8BJZ4"/>
<dbReference type="BioGRID" id="231269">
    <property type="interactions" value="8"/>
</dbReference>
<dbReference type="ComplexPortal" id="CPX-5301">
    <property type="entry name" value="28S mitochondrial small ribosomal subunit"/>
</dbReference>
<dbReference type="FunCoup" id="Q8BJZ4">
    <property type="interactions" value="1634"/>
</dbReference>
<dbReference type="IntAct" id="Q8BJZ4">
    <property type="interactions" value="1"/>
</dbReference>
<dbReference type="STRING" id="10090.ENSMUSP00000048348"/>
<dbReference type="GlyGen" id="Q8BJZ4">
    <property type="glycosylation" value="2 sites, 1 O-linked glycan (1 site)"/>
</dbReference>
<dbReference type="iPTMnet" id="Q8BJZ4"/>
<dbReference type="PhosphoSitePlus" id="Q8BJZ4"/>
<dbReference type="SwissPalm" id="Q8BJZ4"/>
<dbReference type="PaxDb" id="10090-ENSMUSP00000048348"/>
<dbReference type="PeptideAtlas" id="Q8BJZ4"/>
<dbReference type="ProteomicsDB" id="257049"/>
<dbReference type="Pumba" id="Q8BJZ4"/>
<dbReference type="DNASU" id="232536"/>
<dbReference type="GeneID" id="232536"/>
<dbReference type="KEGG" id="mmu:232536"/>
<dbReference type="UCSC" id="uc009ess.1">
    <property type="organism name" value="mouse"/>
</dbReference>
<dbReference type="AGR" id="MGI:2385255"/>
<dbReference type="CTD" id="60488"/>
<dbReference type="MGI" id="MGI:2385255">
    <property type="gene designation" value="Mrps35"/>
</dbReference>
<dbReference type="eggNOG" id="KOG3933">
    <property type="taxonomic scope" value="Eukaryota"/>
</dbReference>
<dbReference type="InParanoid" id="Q8BJZ4"/>
<dbReference type="OrthoDB" id="283424at2759"/>
<dbReference type="PhylomeDB" id="Q8BJZ4"/>
<dbReference type="TreeFam" id="TF318686"/>
<dbReference type="Reactome" id="R-MMU-5389840">
    <property type="pathway name" value="Mitochondrial translation elongation"/>
</dbReference>
<dbReference type="Reactome" id="R-MMU-5419276">
    <property type="pathway name" value="Mitochondrial translation termination"/>
</dbReference>
<dbReference type="BioGRID-ORCS" id="232536">
    <property type="hits" value="23 hits in 114 CRISPR screens"/>
</dbReference>
<dbReference type="ChiTaRS" id="Mrps35">
    <property type="organism name" value="mouse"/>
</dbReference>
<dbReference type="PRO" id="PR:Q8BJZ4"/>
<dbReference type="Proteomes" id="UP000000589">
    <property type="component" value="Unplaced"/>
</dbReference>
<dbReference type="RNAct" id="Q8BJZ4">
    <property type="molecule type" value="protein"/>
</dbReference>
<dbReference type="GO" id="GO:0005743">
    <property type="term" value="C:mitochondrial inner membrane"/>
    <property type="evidence" value="ECO:0000303"/>
    <property type="project" value="ComplexPortal"/>
</dbReference>
<dbReference type="GO" id="GO:0005763">
    <property type="term" value="C:mitochondrial small ribosomal subunit"/>
    <property type="evidence" value="ECO:0000250"/>
    <property type="project" value="UniProtKB"/>
</dbReference>
<dbReference type="GO" id="GO:0005739">
    <property type="term" value="C:mitochondrion"/>
    <property type="evidence" value="ECO:0007005"/>
    <property type="project" value="MGI"/>
</dbReference>
<dbReference type="GO" id="GO:0003735">
    <property type="term" value="F:structural constituent of ribosome"/>
    <property type="evidence" value="ECO:0007669"/>
    <property type="project" value="InterPro"/>
</dbReference>
<dbReference type="GO" id="GO:0032543">
    <property type="term" value="P:mitochondrial translation"/>
    <property type="evidence" value="ECO:0000303"/>
    <property type="project" value="ComplexPortal"/>
</dbReference>
<dbReference type="InterPro" id="IPR019349">
    <property type="entry name" value="Ribosomal_mS35_mit"/>
</dbReference>
<dbReference type="InterPro" id="IPR039848">
    <property type="entry name" value="Ribosomal_mS35_mt"/>
</dbReference>
<dbReference type="PANTHER" id="PTHR13490">
    <property type="entry name" value="MITOCHONDRIAL 28S RIBOSOMAL PROTEIN S28"/>
    <property type="match status" value="1"/>
</dbReference>
<dbReference type="PANTHER" id="PTHR13490:SF0">
    <property type="entry name" value="SMALL RIBOSOMAL SUBUNIT PROTEIN MS35"/>
    <property type="match status" value="1"/>
</dbReference>
<dbReference type="Pfam" id="PF10213">
    <property type="entry name" value="MRP-S28"/>
    <property type="match status" value="1"/>
</dbReference>
<feature type="transit peptide" description="Mitochondrion" evidence="3">
    <location>
        <begin position="1"/>
        <end status="unknown"/>
    </location>
</feature>
<feature type="chain" id="PRO_0000046056" description="Small ribosomal subunit protein mS35">
    <location>
        <begin status="unknown"/>
        <end position="320"/>
    </location>
</feature>
<feature type="region of interest" description="Disordered" evidence="2">
    <location>
        <begin position="24"/>
        <end position="63"/>
    </location>
</feature>
<feature type="sequence conflict" description="In Ref. 1; BAC36950/BAE41824." evidence="3" ref="1">
    <original>S</original>
    <variation>T</variation>
    <location>
        <position position="11"/>
    </location>
</feature>
<feature type="sequence conflict" description="In Ref. 1; BAC36950/BAE41824." evidence="3" ref="1">
    <original>P</original>
    <variation>A</variation>
    <location>
        <position position="16"/>
    </location>
</feature>
<feature type="sequence conflict" description="In Ref. 1; BAC36950/BAE41824." evidence="3" ref="1">
    <original>Y</original>
    <variation>C</variation>
    <location>
        <position position="216"/>
    </location>
</feature>
<feature type="sequence conflict" description="In Ref. 1; BAC36950/BAE41824." evidence="3" ref="1">
    <original>V</original>
    <variation>I</variation>
    <location>
        <position position="293"/>
    </location>
</feature>
<name>RT35_MOUSE</name>
<reference evidence="5" key="1">
    <citation type="journal article" date="2005" name="Science">
        <title>The transcriptional landscape of the mammalian genome.</title>
        <authorList>
            <person name="Carninci P."/>
            <person name="Kasukawa T."/>
            <person name="Katayama S."/>
            <person name="Gough J."/>
            <person name="Frith M.C."/>
            <person name="Maeda N."/>
            <person name="Oyama R."/>
            <person name="Ravasi T."/>
            <person name="Lenhard B."/>
            <person name="Wells C."/>
            <person name="Kodzius R."/>
            <person name="Shimokawa K."/>
            <person name="Bajic V.B."/>
            <person name="Brenner S.E."/>
            <person name="Batalov S."/>
            <person name="Forrest A.R."/>
            <person name="Zavolan M."/>
            <person name="Davis M.J."/>
            <person name="Wilming L.G."/>
            <person name="Aidinis V."/>
            <person name="Allen J.E."/>
            <person name="Ambesi-Impiombato A."/>
            <person name="Apweiler R."/>
            <person name="Aturaliya R.N."/>
            <person name="Bailey T.L."/>
            <person name="Bansal M."/>
            <person name="Baxter L."/>
            <person name="Beisel K.W."/>
            <person name="Bersano T."/>
            <person name="Bono H."/>
            <person name="Chalk A.M."/>
            <person name="Chiu K.P."/>
            <person name="Choudhary V."/>
            <person name="Christoffels A."/>
            <person name="Clutterbuck D.R."/>
            <person name="Crowe M.L."/>
            <person name="Dalla E."/>
            <person name="Dalrymple B.P."/>
            <person name="de Bono B."/>
            <person name="Della Gatta G."/>
            <person name="di Bernardo D."/>
            <person name="Down T."/>
            <person name="Engstrom P."/>
            <person name="Fagiolini M."/>
            <person name="Faulkner G."/>
            <person name="Fletcher C.F."/>
            <person name="Fukushima T."/>
            <person name="Furuno M."/>
            <person name="Futaki S."/>
            <person name="Gariboldi M."/>
            <person name="Georgii-Hemming P."/>
            <person name="Gingeras T.R."/>
            <person name="Gojobori T."/>
            <person name="Green R.E."/>
            <person name="Gustincich S."/>
            <person name="Harbers M."/>
            <person name="Hayashi Y."/>
            <person name="Hensch T.K."/>
            <person name="Hirokawa N."/>
            <person name="Hill D."/>
            <person name="Huminiecki L."/>
            <person name="Iacono M."/>
            <person name="Ikeo K."/>
            <person name="Iwama A."/>
            <person name="Ishikawa T."/>
            <person name="Jakt M."/>
            <person name="Kanapin A."/>
            <person name="Katoh M."/>
            <person name="Kawasawa Y."/>
            <person name="Kelso J."/>
            <person name="Kitamura H."/>
            <person name="Kitano H."/>
            <person name="Kollias G."/>
            <person name="Krishnan S.P."/>
            <person name="Kruger A."/>
            <person name="Kummerfeld S.K."/>
            <person name="Kurochkin I.V."/>
            <person name="Lareau L.F."/>
            <person name="Lazarevic D."/>
            <person name="Lipovich L."/>
            <person name="Liu J."/>
            <person name="Liuni S."/>
            <person name="McWilliam S."/>
            <person name="Madan Babu M."/>
            <person name="Madera M."/>
            <person name="Marchionni L."/>
            <person name="Matsuda H."/>
            <person name="Matsuzawa S."/>
            <person name="Miki H."/>
            <person name="Mignone F."/>
            <person name="Miyake S."/>
            <person name="Morris K."/>
            <person name="Mottagui-Tabar S."/>
            <person name="Mulder N."/>
            <person name="Nakano N."/>
            <person name="Nakauchi H."/>
            <person name="Ng P."/>
            <person name="Nilsson R."/>
            <person name="Nishiguchi S."/>
            <person name="Nishikawa S."/>
            <person name="Nori F."/>
            <person name="Ohara O."/>
            <person name="Okazaki Y."/>
            <person name="Orlando V."/>
            <person name="Pang K.C."/>
            <person name="Pavan W.J."/>
            <person name="Pavesi G."/>
            <person name="Pesole G."/>
            <person name="Petrovsky N."/>
            <person name="Piazza S."/>
            <person name="Reed J."/>
            <person name="Reid J.F."/>
            <person name="Ring B.Z."/>
            <person name="Ringwald M."/>
            <person name="Rost B."/>
            <person name="Ruan Y."/>
            <person name="Salzberg S.L."/>
            <person name="Sandelin A."/>
            <person name="Schneider C."/>
            <person name="Schoenbach C."/>
            <person name="Sekiguchi K."/>
            <person name="Semple C.A."/>
            <person name="Seno S."/>
            <person name="Sessa L."/>
            <person name="Sheng Y."/>
            <person name="Shibata Y."/>
            <person name="Shimada H."/>
            <person name="Shimada K."/>
            <person name="Silva D."/>
            <person name="Sinclair B."/>
            <person name="Sperling S."/>
            <person name="Stupka E."/>
            <person name="Sugiura K."/>
            <person name="Sultana R."/>
            <person name="Takenaka Y."/>
            <person name="Taki K."/>
            <person name="Tammoja K."/>
            <person name="Tan S.L."/>
            <person name="Tang S."/>
            <person name="Taylor M.S."/>
            <person name="Tegner J."/>
            <person name="Teichmann S.A."/>
            <person name="Ueda H.R."/>
            <person name="van Nimwegen E."/>
            <person name="Verardo R."/>
            <person name="Wei C.L."/>
            <person name="Yagi K."/>
            <person name="Yamanishi H."/>
            <person name="Zabarovsky E."/>
            <person name="Zhu S."/>
            <person name="Zimmer A."/>
            <person name="Hide W."/>
            <person name="Bult C."/>
            <person name="Grimmond S.M."/>
            <person name="Teasdale R.D."/>
            <person name="Liu E.T."/>
            <person name="Brusic V."/>
            <person name="Quackenbush J."/>
            <person name="Wahlestedt C."/>
            <person name="Mattick J.S."/>
            <person name="Hume D.A."/>
            <person name="Kai C."/>
            <person name="Sasaki D."/>
            <person name="Tomaru Y."/>
            <person name="Fukuda S."/>
            <person name="Kanamori-Katayama M."/>
            <person name="Suzuki M."/>
            <person name="Aoki J."/>
            <person name="Arakawa T."/>
            <person name="Iida J."/>
            <person name="Imamura K."/>
            <person name="Itoh M."/>
            <person name="Kato T."/>
            <person name="Kawaji H."/>
            <person name="Kawagashira N."/>
            <person name="Kawashima T."/>
            <person name="Kojima M."/>
            <person name="Kondo S."/>
            <person name="Konno H."/>
            <person name="Nakano K."/>
            <person name="Ninomiya N."/>
            <person name="Nishio T."/>
            <person name="Okada M."/>
            <person name="Plessy C."/>
            <person name="Shibata K."/>
            <person name="Shiraki T."/>
            <person name="Suzuki S."/>
            <person name="Tagami M."/>
            <person name="Waki K."/>
            <person name="Watahiki A."/>
            <person name="Okamura-Oho Y."/>
            <person name="Suzuki H."/>
            <person name="Kawai J."/>
            <person name="Hayashizaki Y."/>
        </authorList>
    </citation>
    <scope>NUCLEOTIDE SEQUENCE [LARGE SCALE MRNA]</scope>
    <source>
        <strain evidence="5">C57BL/6J</strain>
        <strain evidence="6">NOD</strain>
        <tissue evidence="5">Embryo</tissue>
    </source>
</reference>
<reference key="2">
    <citation type="journal article" date="2009" name="PLoS Biol.">
        <title>Lineage-specific biology revealed by a finished genome assembly of the mouse.</title>
        <authorList>
            <person name="Church D.M."/>
            <person name="Goodstadt L."/>
            <person name="Hillier L.W."/>
            <person name="Zody M.C."/>
            <person name="Goldstein S."/>
            <person name="She X."/>
            <person name="Bult C.J."/>
            <person name="Agarwala R."/>
            <person name="Cherry J.L."/>
            <person name="DiCuccio M."/>
            <person name="Hlavina W."/>
            <person name="Kapustin Y."/>
            <person name="Meric P."/>
            <person name="Maglott D."/>
            <person name="Birtle Z."/>
            <person name="Marques A.C."/>
            <person name="Graves T."/>
            <person name="Zhou S."/>
            <person name="Teague B."/>
            <person name="Potamousis K."/>
            <person name="Churas C."/>
            <person name="Place M."/>
            <person name="Herschleb J."/>
            <person name="Runnheim R."/>
            <person name="Forrest D."/>
            <person name="Amos-Landgraf J."/>
            <person name="Schwartz D.C."/>
            <person name="Cheng Z."/>
            <person name="Lindblad-Toh K."/>
            <person name="Eichler E.E."/>
            <person name="Ponting C.P."/>
        </authorList>
    </citation>
    <scope>NUCLEOTIDE SEQUENCE [LARGE SCALE GENOMIC DNA]</scope>
    <source>
        <strain>C57BL/6J</strain>
    </source>
</reference>
<reference evidence="3 4" key="3">
    <citation type="journal article" date="2004" name="Genome Res.">
        <title>The status, quality, and expansion of the NIH full-length cDNA project: the Mammalian Gene Collection (MGC).</title>
        <authorList>
            <consortium name="The MGC Project Team"/>
        </authorList>
    </citation>
    <scope>NUCLEOTIDE SEQUENCE [LARGE SCALE MRNA] OF 4-320</scope>
    <source>
        <strain evidence="4">FVB/N</strain>
        <tissue evidence="4">Liver</tissue>
    </source>
</reference>
<reference key="4">
    <citation type="journal article" date="2010" name="Cell">
        <title>A tissue-specific atlas of mouse protein phosphorylation and expression.</title>
        <authorList>
            <person name="Huttlin E.L."/>
            <person name="Jedrychowski M.P."/>
            <person name="Elias J.E."/>
            <person name="Goswami T."/>
            <person name="Rad R."/>
            <person name="Beausoleil S.A."/>
            <person name="Villen J."/>
            <person name="Haas W."/>
            <person name="Sowa M.E."/>
            <person name="Gygi S.P."/>
        </authorList>
    </citation>
    <scope>IDENTIFICATION BY MASS SPECTROMETRY [LARGE SCALE ANALYSIS]</scope>
    <source>
        <tissue>Brain</tissue>
        <tissue>Brown adipose tissue</tissue>
        <tissue>Heart</tissue>
        <tissue>Kidney</tissue>
        <tissue>Liver</tissue>
        <tissue>Lung</tissue>
        <tissue>Spleen</tissue>
        <tissue>Testis</tissue>
    </source>
</reference>